<organism>
    <name type="scientific">Psychrobacter cryohalolentis (strain ATCC BAA-1226 / DSM 17306 / VKM B-2378 / K5)</name>
    <dbReference type="NCBI Taxonomy" id="335284"/>
    <lineage>
        <taxon>Bacteria</taxon>
        <taxon>Pseudomonadati</taxon>
        <taxon>Pseudomonadota</taxon>
        <taxon>Gammaproteobacteria</taxon>
        <taxon>Moraxellales</taxon>
        <taxon>Moraxellaceae</taxon>
        <taxon>Psychrobacter</taxon>
    </lineage>
</organism>
<dbReference type="EC" id="4.1.1.11" evidence="1"/>
<dbReference type="EMBL" id="CP000323">
    <property type="protein sequence ID" value="ABE73966.1"/>
    <property type="molecule type" value="Genomic_DNA"/>
</dbReference>
<dbReference type="RefSeq" id="WP_011279481.1">
    <property type="nucleotide sequence ID" value="NC_007969.1"/>
</dbReference>
<dbReference type="SMR" id="Q1QED7"/>
<dbReference type="STRING" id="335284.Pcryo_0182"/>
<dbReference type="KEGG" id="pcr:Pcryo_0182"/>
<dbReference type="eggNOG" id="COG0853">
    <property type="taxonomic scope" value="Bacteria"/>
</dbReference>
<dbReference type="HOGENOM" id="CLU_115305_2_1_6"/>
<dbReference type="UniPathway" id="UPA00028">
    <property type="reaction ID" value="UER00002"/>
</dbReference>
<dbReference type="Proteomes" id="UP000002425">
    <property type="component" value="Chromosome"/>
</dbReference>
<dbReference type="GO" id="GO:0005829">
    <property type="term" value="C:cytosol"/>
    <property type="evidence" value="ECO:0007669"/>
    <property type="project" value="TreeGrafter"/>
</dbReference>
<dbReference type="GO" id="GO:0004068">
    <property type="term" value="F:aspartate 1-decarboxylase activity"/>
    <property type="evidence" value="ECO:0007669"/>
    <property type="project" value="UniProtKB-UniRule"/>
</dbReference>
<dbReference type="GO" id="GO:0006523">
    <property type="term" value="P:alanine biosynthetic process"/>
    <property type="evidence" value="ECO:0007669"/>
    <property type="project" value="InterPro"/>
</dbReference>
<dbReference type="GO" id="GO:0015940">
    <property type="term" value="P:pantothenate biosynthetic process"/>
    <property type="evidence" value="ECO:0007669"/>
    <property type="project" value="UniProtKB-UniRule"/>
</dbReference>
<dbReference type="CDD" id="cd06919">
    <property type="entry name" value="Asp_decarbox"/>
    <property type="match status" value="1"/>
</dbReference>
<dbReference type="Gene3D" id="2.40.40.20">
    <property type="match status" value="1"/>
</dbReference>
<dbReference type="HAMAP" id="MF_00446">
    <property type="entry name" value="PanD"/>
    <property type="match status" value="1"/>
</dbReference>
<dbReference type="InterPro" id="IPR009010">
    <property type="entry name" value="Asp_de-COase-like_dom_sf"/>
</dbReference>
<dbReference type="InterPro" id="IPR003190">
    <property type="entry name" value="Asp_decarbox"/>
</dbReference>
<dbReference type="NCBIfam" id="TIGR00223">
    <property type="entry name" value="panD"/>
    <property type="match status" value="1"/>
</dbReference>
<dbReference type="PANTHER" id="PTHR21012">
    <property type="entry name" value="ASPARTATE 1-DECARBOXYLASE"/>
    <property type="match status" value="1"/>
</dbReference>
<dbReference type="PANTHER" id="PTHR21012:SF0">
    <property type="entry name" value="ASPARTATE 1-DECARBOXYLASE"/>
    <property type="match status" value="1"/>
</dbReference>
<dbReference type="Pfam" id="PF02261">
    <property type="entry name" value="Asp_decarbox"/>
    <property type="match status" value="1"/>
</dbReference>
<dbReference type="PIRSF" id="PIRSF006246">
    <property type="entry name" value="Asp_decarbox"/>
    <property type="match status" value="1"/>
</dbReference>
<dbReference type="SUPFAM" id="SSF50692">
    <property type="entry name" value="ADC-like"/>
    <property type="match status" value="1"/>
</dbReference>
<sequence length="126" mass="13839">MLLNMLKCKLHRARVTHAELHYEGSCGIDGDLLDLAGLRENESIDIYNVTNGKRFRTYAIRAEAGSGIISLNGAAAHMADLGDIVIICAYAHFDEVEASTYQPRLVYCNEDNTVKDTANIIPVQVA</sequence>
<reference key="1">
    <citation type="submission" date="2006-03" db="EMBL/GenBank/DDBJ databases">
        <title>Complete sequence of chromosome of Psychrobacter cryohalolentis K5.</title>
        <authorList>
            <consortium name="US DOE Joint Genome Institute"/>
            <person name="Copeland A."/>
            <person name="Lucas S."/>
            <person name="Lapidus A."/>
            <person name="Barry K."/>
            <person name="Detter J.C."/>
            <person name="Glavina T."/>
            <person name="Hammon N."/>
            <person name="Israni S."/>
            <person name="Dalin E."/>
            <person name="Tice H."/>
            <person name="Pitluck S."/>
            <person name="Brettin T."/>
            <person name="Bruce D."/>
            <person name="Han C."/>
            <person name="Tapia R."/>
            <person name="Sims D.R."/>
            <person name="Gilna P."/>
            <person name="Schmutz J."/>
            <person name="Larimer F."/>
            <person name="Land M."/>
            <person name="Hauser L."/>
            <person name="Kyrpides N."/>
            <person name="Kim E."/>
            <person name="Richardson P."/>
        </authorList>
    </citation>
    <scope>NUCLEOTIDE SEQUENCE [LARGE SCALE GENOMIC DNA]</scope>
    <source>
        <strain>ATCC BAA-1226 / DSM 17306 / VKM B-2378 / K5</strain>
    </source>
</reference>
<gene>
    <name evidence="1" type="primary">panD</name>
    <name type="ordered locus">Pcryo_0182</name>
</gene>
<evidence type="ECO:0000255" key="1">
    <source>
        <dbReference type="HAMAP-Rule" id="MF_00446"/>
    </source>
</evidence>
<accession>Q1QED7</accession>
<proteinExistence type="inferred from homology"/>
<keyword id="KW-0068">Autocatalytic cleavage</keyword>
<keyword id="KW-0963">Cytoplasm</keyword>
<keyword id="KW-0210">Decarboxylase</keyword>
<keyword id="KW-0456">Lyase</keyword>
<keyword id="KW-0566">Pantothenate biosynthesis</keyword>
<keyword id="KW-0670">Pyruvate</keyword>
<keyword id="KW-0704">Schiff base</keyword>
<keyword id="KW-0865">Zymogen</keyword>
<protein>
    <recommendedName>
        <fullName evidence="1">Aspartate 1-decarboxylase</fullName>
        <ecNumber evidence="1">4.1.1.11</ecNumber>
    </recommendedName>
    <alternativeName>
        <fullName evidence="1">Aspartate alpha-decarboxylase</fullName>
    </alternativeName>
    <component>
        <recommendedName>
            <fullName evidence="1">Aspartate 1-decarboxylase beta chain</fullName>
        </recommendedName>
    </component>
    <component>
        <recommendedName>
            <fullName evidence="1">Aspartate 1-decarboxylase alpha chain</fullName>
        </recommendedName>
    </component>
</protein>
<feature type="chain" id="PRO_0000307055" description="Aspartate 1-decarboxylase beta chain" evidence="1">
    <location>
        <begin position="1"/>
        <end position="24"/>
    </location>
</feature>
<feature type="chain" id="PRO_0000307056" description="Aspartate 1-decarboxylase alpha chain" evidence="1">
    <location>
        <begin position="25"/>
        <end position="126"/>
    </location>
</feature>
<feature type="active site" description="Schiff-base intermediate with substrate; via pyruvic acid" evidence="1">
    <location>
        <position position="25"/>
    </location>
</feature>
<feature type="active site" description="Proton donor" evidence="1">
    <location>
        <position position="58"/>
    </location>
</feature>
<feature type="binding site" evidence="1">
    <location>
        <position position="57"/>
    </location>
    <ligand>
        <name>substrate</name>
    </ligand>
</feature>
<feature type="binding site" evidence="1">
    <location>
        <begin position="73"/>
        <end position="75"/>
    </location>
    <ligand>
        <name>substrate</name>
    </ligand>
</feature>
<feature type="modified residue" description="Pyruvic acid (Ser)" evidence="1">
    <location>
        <position position="25"/>
    </location>
</feature>
<name>PAND_PSYCK</name>
<comment type="function">
    <text evidence="1">Catalyzes the pyruvoyl-dependent decarboxylation of aspartate to produce beta-alanine.</text>
</comment>
<comment type="catalytic activity">
    <reaction evidence="1">
        <text>L-aspartate + H(+) = beta-alanine + CO2</text>
        <dbReference type="Rhea" id="RHEA:19497"/>
        <dbReference type="ChEBI" id="CHEBI:15378"/>
        <dbReference type="ChEBI" id="CHEBI:16526"/>
        <dbReference type="ChEBI" id="CHEBI:29991"/>
        <dbReference type="ChEBI" id="CHEBI:57966"/>
        <dbReference type="EC" id="4.1.1.11"/>
    </reaction>
</comment>
<comment type="cofactor">
    <cofactor evidence="1">
        <name>pyruvate</name>
        <dbReference type="ChEBI" id="CHEBI:15361"/>
    </cofactor>
    <text evidence="1">Binds 1 pyruvoyl group covalently per subunit.</text>
</comment>
<comment type="pathway">
    <text evidence="1">Cofactor biosynthesis; (R)-pantothenate biosynthesis; beta-alanine from L-aspartate: step 1/1.</text>
</comment>
<comment type="subunit">
    <text evidence="1">Heterooctamer of four alpha and four beta subunits.</text>
</comment>
<comment type="subcellular location">
    <subcellularLocation>
        <location evidence="1">Cytoplasm</location>
    </subcellularLocation>
</comment>
<comment type="PTM">
    <text evidence="1">Is synthesized initially as an inactive proenzyme, which is activated by self-cleavage at a specific serine bond to produce a beta-subunit with a hydroxyl group at its C-terminus and an alpha-subunit with a pyruvoyl group at its N-terminus.</text>
</comment>
<comment type="similarity">
    <text evidence="1">Belongs to the PanD family.</text>
</comment>